<reference key="1">
    <citation type="journal article" date="2003" name="Nature">
        <title>Genome divergence in two Prochlorococcus ecotypes reflects oceanic niche differentiation.</title>
        <authorList>
            <person name="Rocap G."/>
            <person name="Larimer F.W."/>
            <person name="Lamerdin J.E."/>
            <person name="Malfatti S."/>
            <person name="Chain P."/>
            <person name="Ahlgren N.A."/>
            <person name="Arellano A."/>
            <person name="Coleman M."/>
            <person name="Hauser L."/>
            <person name="Hess W.R."/>
            <person name="Johnson Z.I."/>
            <person name="Land M.L."/>
            <person name="Lindell D."/>
            <person name="Post A.F."/>
            <person name="Regala W."/>
            <person name="Shah M."/>
            <person name="Shaw S.L."/>
            <person name="Steglich C."/>
            <person name="Sullivan M.B."/>
            <person name="Ting C.S."/>
            <person name="Tolonen A."/>
            <person name="Webb E.A."/>
            <person name="Zinser E.R."/>
            <person name="Chisholm S.W."/>
        </authorList>
    </citation>
    <scope>NUCLEOTIDE SEQUENCE [LARGE SCALE GENOMIC DNA]</scope>
    <source>
        <strain>CCMP1986 / NIES-2087 / MED4</strain>
    </source>
</reference>
<organism>
    <name type="scientific">Prochlorococcus marinus subsp. pastoris (strain CCMP1986 / NIES-2087 / MED4)</name>
    <dbReference type="NCBI Taxonomy" id="59919"/>
    <lineage>
        <taxon>Bacteria</taxon>
        <taxon>Bacillati</taxon>
        <taxon>Cyanobacteriota</taxon>
        <taxon>Cyanophyceae</taxon>
        <taxon>Synechococcales</taxon>
        <taxon>Prochlorococcaceae</taxon>
        <taxon>Prochlorococcus</taxon>
    </lineage>
</organism>
<comment type="function">
    <text evidence="1">Redox regulated molecular chaperone. Protects both thermally unfolding and oxidatively damaged proteins from irreversible aggregation. Plays an important role in the bacterial defense system toward oxidative stress.</text>
</comment>
<comment type="subcellular location">
    <subcellularLocation>
        <location evidence="1">Cytoplasm</location>
    </subcellularLocation>
</comment>
<comment type="PTM">
    <text evidence="1">Under oxidizing conditions two disulfide bonds are formed involving the reactive cysteines. Under reducing conditions zinc is bound to the reactive cysteines and the protein is inactive.</text>
</comment>
<comment type="similarity">
    <text evidence="1">Belongs to the HSP33 family.</text>
</comment>
<dbReference type="EMBL" id="BX548174">
    <property type="protein sequence ID" value="CAE19124.1"/>
    <property type="molecule type" value="Genomic_DNA"/>
</dbReference>
<dbReference type="RefSeq" id="WP_011132299.1">
    <property type="nucleotide sequence ID" value="NC_005072.1"/>
</dbReference>
<dbReference type="SMR" id="Q7V226"/>
<dbReference type="STRING" id="59919.PMM0665"/>
<dbReference type="KEGG" id="pmm:PMM0665"/>
<dbReference type="eggNOG" id="COG1281">
    <property type="taxonomic scope" value="Bacteria"/>
</dbReference>
<dbReference type="HOGENOM" id="CLU_054493_1_0_3"/>
<dbReference type="OrthoDB" id="9776534at2"/>
<dbReference type="Proteomes" id="UP000001026">
    <property type="component" value="Chromosome"/>
</dbReference>
<dbReference type="GO" id="GO:0005737">
    <property type="term" value="C:cytoplasm"/>
    <property type="evidence" value="ECO:0007669"/>
    <property type="project" value="UniProtKB-SubCell"/>
</dbReference>
<dbReference type="GO" id="GO:0044183">
    <property type="term" value="F:protein folding chaperone"/>
    <property type="evidence" value="ECO:0007669"/>
    <property type="project" value="TreeGrafter"/>
</dbReference>
<dbReference type="GO" id="GO:0051082">
    <property type="term" value="F:unfolded protein binding"/>
    <property type="evidence" value="ECO:0007669"/>
    <property type="project" value="UniProtKB-UniRule"/>
</dbReference>
<dbReference type="GO" id="GO:0042026">
    <property type="term" value="P:protein refolding"/>
    <property type="evidence" value="ECO:0007669"/>
    <property type="project" value="TreeGrafter"/>
</dbReference>
<dbReference type="CDD" id="cd00498">
    <property type="entry name" value="Hsp33"/>
    <property type="match status" value="1"/>
</dbReference>
<dbReference type="Gene3D" id="3.55.30.10">
    <property type="entry name" value="Hsp33 domain"/>
    <property type="match status" value="1"/>
</dbReference>
<dbReference type="Gene3D" id="3.90.1280.10">
    <property type="entry name" value="HSP33 redox switch-like"/>
    <property type="match status" value="1"/>
</dbReference>
<dbReference type="HAMAP" id="MF_00117">
    <property type="entry name" value="HslO"/>
    <property type="match status" value="1"/>
</dbReference>
<dbReference type="InterPro" id="IPR000397">
    <property type="entry name" value="Heat_shock_Hsp33"/>
</dbReference>
<dbReference type="InterPro" id="IPR016154">
    <property type="entry name" value="Heat_shock_Hsp33_C"/>
</dbReference>
<dbReference type="InterPro" id="IPR016153">
    <property type="entry name" value="Heat_shock_Hsp33_N"/>
</dbReference>
<dbReference type="NCBIfam" id="NF001033">
    <property type="entry name" value="PRK00114.1"/>
    <property type="match status" value="1"/>
</dbReference>
<dbReference type="PANTHER" id="PTHR30111">
    <property type="entry name" value="33 KDA CHAPERONIN"/>
    <property type="match status" value="1"/>
</dbReference>
<dbReference type="PANTHER" id="PTHR30111:SF1">
    <property type="entry name" value="33 KDA CHAPERONIN"/>
    <property type="match status" value="1"/>
</dbReference>
<dbReference type="Pfam" id="PF01430">
    <property type="entry name" value="HSP33"/>
    <property type="match status" value="1"/>
</dbReference>
<dbReference type="PIRSF" id="PIRSF005261">
    <property type="entry name" value="Heat_shock_Hsp33"/>
    <property type="match status" value="1"/>
</dbReference>
<dbReference type="SUPFAM" id="SSF64397">
    <property type="entry name" value="Hsp33 domain"/>
    <property type="match status" value="1"/>
</dbReference>
<dbReference type="SUPFAM" id="SSF118352">
    <property type="entry name" value="HSP33 redox switch-like"/>
    <property type="match status" value="1"/>
</dbReference>
<accession>Q7V226</accession>
<feature type="chain" id="PRO_0000192192" description="33 kDa chaperonin">
    <location>
        <begin position="1"/>
        <end position="300"/>
    </location>
</feature>
<feature type="disulfide bond" description="Redox-active" evidence="1">
    <location>
        <begin position="247"/>
        <end position="249"/>
    </location>
</feature>
<feature type="disulfide bond" description="Redox-active" evidence="1">
    <location>
        <begin position="280"/>
        <end position="283"/>
    </location>
</feature>
<gene>
    <name evidence="1" type="primary">hslO</name>
    <name type="synonym">hsp33</name>
    <name type="ordered locus">PMM0665</name>
</gene>
<evidence type="ECO:0000255" key="1">
    <source>
        <dbReference type="HAMAP-Rule" id="MF_00117"/>
    </source>
</evidence>
<protein>
    <recommendedName>
        <fullName evidence="1">33 kDa chaperonin</fullName>
    </recommendedName>
    <alternativeName>
        <fullName evidence="1">Heat shock protein 33 homolog</fullName>
        <shortName evidence="1">HSP33</shortName>
    </alternativeName>
</protein>
<proteinExistence type="inferred from homology"/>
<sequence>MGDKIVRATAANGGIRLVAVLTTDSSMEAKERHGLSYLTTSILGRAFSASLLLASSMKVMHGRVTLRVRSDGPLKGLLVDAGRDGKVRGYVGNPNLELDLVKTKQNQYSFDFTKALGTGYLNVIRDNGFGEPFTSTVELVNGNIAEDLASYLYHSEQTPSAVFIGEKIQNKNIISSGGLLAQVLPKKETDPLLVSLLEERCKEINSFSEDLFKSKDNLLSLIKNIFPDIDDKSISEKARTQEVRFECRCSRQRSLNAMKMLDKNELKDILIKEGKAELVCEFCKNKYLINSEEIKEMIKN</sequence>
<name>HSLO_PROMP</name>
<keyword id="KW-0143">Chaperone</keyword>
<keyword id="KW-0963">Cytoplasm</keyword>
<keyword id="KW-1015">Disulfide bond</keyword>
<keyword id="KW-0676">Redox-active center</keyword>
<keyword id="KW-0862">Zinc</keyword>